<sequence>MASGNCTTPTTFILSGLTDNPGLQMPLFMVFLAIYTITLLTNLGLIRLISVDLHLQTPMYIFLQNLSFTDAAYSTVITPKMLATFLEERKTISYVGCILQYFSFVLLTTSECLLLAVMAYDRYVAICKPLLYPAIMTKAVCWRLVESLYFLAFLNSLVHTCGLLKLSFCYSNVVNHFFCDISPLFQISSSSIAISELLVIISGSLFVMSSIIIILISYVFIILTVVMIRSKDGKYKAFSTCTSHLMAVSLFHGTVIFMYLRPVKLFSLDTDKIASLFYTVVIPMLNPLIYSWRNKEVKDALRRLTATTFGFIDSKAVQ</sequence>
<name>OLF3_CHICK</name>
<reference key="1">
    <citation type="journal article" date="1996" name="Mech. Dev.">
        <title>Olfaction in birds: differential embryonic expression of nine putative odorant receptor genes in the avian olfactory system.</title>
        <authorList>
            <person name="Nef S."/>
            <person name="Allaman I."/>
            <person name="Fiumelli H."/>
            <person name="de Castro E."/>
            <person name="Nef P."/>
        </authorList>
    </citation>
    <scope>NUCLEOTIDE SEQUENCE [GENOMIC DNA]</scope>
    <source>
        <tissue>Olfactory epithelium</tissue>
    </source>
</reference>
<gene>
    <name type="primary">COR3</name>
</gene>
<proteinExistence type="inferred from homology"/>
<comment type="function">
    <text evidence="3">Odorant receptor.</text>
</comment>
<comment type="subcellular location">
    <subcellularLocation>
        <location>Cell membrane</location>
        <topology>Multi-pass membrane protein</topology>
    </subcellularLocation>
</comment>
<comment type="similarity">
    <text evidence="2">Belongs to the G-protein coupled receptor 1 family.</text>
</comment>
<evidence type="ECO:0000255" key="1"/>
<evidence type="ECO:0000255" key="2">
    <source>
        <dbReference type="PROSITE-ProRule" id="PRU00521"/>
    </source>
</evidence>
<evidence type="ECO:0000305" key="3"/>
<accession>P37069</accession>
<protein>
    <recommendedName>
        <fullName>Olfactory receptor-like protein COR3</fullName>
    </recommendedName>
</protein>
<dbReference type="EMBL" id="Z79585">
    <property type="protein sequence ID" value="CAB01846.1"/>
    <property type="molecule type" value="Genomic_DNA"/>
</dbReference>
<dbReference type="SMR" id="P37069"/>
<dbReference type="FunCoup" id="P37069">
    <property type="interactions" value="4"/>
</dbReference>
<dbReference type="GlyCosmos" id="P37069">
    <property type="glycosylation" value="1 site, No reported glycans"/>
</dbReference>
<dbReference type="GlyGen" id="P37069">
    <property type="glycosylation" value="1 site"/>
</dbReference>
<dbReference type="VEuPathDB" id="HostDB:geneid_428830"/>
<dbReference type="InParanoid" id="P37069"/>
<dbReference type="Proteomes" id="UP000000539">
    <property type="component" value="Unassembled WGS sequence"/>
</dbReference>
<dbReference type="GO" id="GO:0005886">
    <property type="term" value="C:plasma membrane"/>
    <property type="evidence" value="ECO:0007669"/>
    <property type="project" value="UniProtKB-SubCell"/>
</dbReference>
<dbReference type="GO" id="GO:0004930">
    <property type="term" value="F:G protein-coupled receptor activity"/>
    <property type="evidence" value="ECO:0007669"/>
    <property type="project" value="UniProtKB-KW"/>
</dbReference>
<dbReference type="GO" id="GO:0005549">
    <property type="term" value="F:odorant binding"/>
    <property type="evidence" value="ECO:0000318"/>
    <property type="project" value="GO_Central"/>
</dbReference>
<dbReference type="GO" id="GO:0004984">
    <property type="term" value="F:olfactory receptor activity"/>
    <property type="evidence" value="ECO:0000318"/>
    <property type="project" value="GO_Central"/>
</dbReference>
<dbReference type="FunFam" id="1.20.1070.10:FF:000003">
    <property type="entry name" value="Olfactory receptor"/>
    <property type="match status" value="1"/>
</dbReference>
<dbReference type="Gene3D" id="1.20.1070.10">
    <property type="entry name" value="Rhodopsin 7-helix transmembrane proteins"/>
    <property type="match status" value="1"/>
</dbReference>
<dbReference type="InterPro" id="IPR000276">
    <property type="entry name" value="GPCR_Rhodpsn"/>
</dbReference>
<dbReference type="InterPro" id="IPR017452">
    <property type="entry name" value="GPCR_Rhodpsn_7TM"/>
</dbReference>
<dbReference type="InterPro" id="IPR000725">
    <property type="entry name" value="Olfact_rcpt"/>
</dbReference>
<dbReference type="PANTHER" id="PTHR48018">
    <property type="entry name" value="OLFACTORY RECEPTOR"/>
    <property type="match status" value="1"/>
</dbReference>
<dbReference type="Pfam" id="PF13853">
    <property type="entry name" value="7tm_4"/>
    <property type="match status" value="1"/>
</dbReference>
<dbReference type="PRINTS" id="PR00237">
    <property type="entry name" value="GPCRRHODOPSN"/>
</dbReference>
<dbReference type="PRINTS" id="PR00245">
    <property type="entry name" value="OLFACTORYR"/>
</dbReference>
<dbReference type="SUPFAM" id="SSF81321">
    <property type="entry name" value="Family A G protein-coupled receptor-like"/>
    <property type="match status" value="1"/>
</dbReference>
<dbReference type="PROSITE" id="PS00237">
    <property type="entry name" value="G_PROTEIN_RECEP_F1_1"/>
    <property type="match status" value="1"/>
</dbReference>
<dbReference type="PROSITE" id="PS50262">
    <property type="entry name" value="G_PROTEIN_RECEP_F1_2"/>
    <property type="match status" value="1"/>
</dbReference>
<feature type="chain" id="PRO_0000150882" description="Olfactory receptor-like protein COR3">
    <location>
        <begin position="1"/>
        <end position="318"/>
    </location>
</feature>
<feature type="topological domain" description="Extracellular" evidence="1">
    <location>
        <begin position="1"/>
        <end position="26"/>
    </location>
</feature>
<feature type="transmembrane region" description="Helical; Name=1" evidence="1">
    <location>
        <begin position="27"/>
        <end position="49"/>
    </location>
</feature>
<feature type="topological domain" description="Cytoplasmic" evidence="1">
    <location>
        <begin position="50"/>
        <end position="57"/>
    </location>
</feature>
<feature type="transmembrane region" description="Helical; Name=2" evidence="1">
    <location>
        <begin position="58"/>
        <end position="79"/>
    </location>
</feature>
<feature type="topological domain" description="Extracellular" evidence="1">
    <location>
        <begin position="80"/>
        <end position="100"/>
    </location>
</feature>
<feature type="transmembrane region" description="Helical; Name=3" evidence="1">
    <location>
        <begin position="101"/>
        <end position="120"/>
    </location>
</feature>
<feature type="topological domain" description="Cytoplasmic" evidence="1">
    <location>
        <begin position="121"/>
        <end position="139"/>
    </location>
</feature>
<feature type="transmembrane region" description="Helical; Name=4" evidence="1">
    <location>
        <begin position="140"/>
        <end position="164"/>
    </location>
</feature>
<feature type="topological domain" description="Extracellular" evidence="1">
    <location>
        <begin position="165"/>
        <end position="205"/>
    </location>
</feature>
<feature type="transmembrane region" description="Helical; Name=5" evidence="1">
    <location>
        <begin position="206"/>
        <end position="226"/>
    </location>
</feature>
<feature type="topological domain" description="Cytoplasmic" evidence="1">
    <location>
        <begin position="227"/>
        <end position="239"/>
    </location>
</feature>
<feature type="transmembrane region" description="Helical; Name=6" evidence="1">
    <location>
        <begin position="240"/>
        <end position="260"/>
    </location>
</feature>
<feature type="topological domain" description="Extracellular" evidence="1">
    <location>
        <begin position="261"/>
        <end position="271"/>
    </location>
</feature>
<feature type="transmembrane region" description="Helical; Name=7" evidence="1">
    <location>
        <begin position="272"/>
        <end position="292"/>
    </location>
</feature>
<feature type="topological domain" description="Cytoplasmic" evidence="1">
    <location>
        <begin position="293"/>
        <end position="318"/>
    </location>
</feature>
<feature type="glycosylation site" description="N-linked (GlcNAc...) asparagine" evidence="1">
    <location>
        <position position="5"/>
    </location>
</feature>
<feature type="disulfide bond" evidence="2">
    <location>
        <begin position="97"/>
        <end position="179"/>
    </location>
</feature>
<organism>
    <name type="scientific">Gallus gallus</name>
    <name type="common">Chicken</name>
    <dbReference type="NCBI Taxonomy" id="9031"/>
    <lineage>
        <taxon>Eukaryota</taxon>
        <taxon>Metazoa</taxon>
        <taxon>Chordata</taxon>
        <taxon>Craniata</taxon>
        <taxon>Vertebrata</taxon>
        <taxon>Euteleostomi</taxon>
        <taxon>Archelosauria</taxon>
        <taxon>Archosauria</taxon>
        <taxon>Dinosauria</taxon>
        <taxon>Saurischia</taxon>
        <taxon>Theropoda</taxon>
        <taxon>Coelurosauria</taxon>
        <taxon>Aves</taxon>
        <taxon>Neognathae</taxon>
        <taxon>Galloanserae</taxon>
        <taxon>Galliformes</taxon>
        <taxon>Phasianidae</taxon>
        <taxon>Phasianinae</taxon>
        <taxon>Gallus</taxon>
    </lineage>
</organism>
<keyword id="KW-1003">Cell membrane</keyword>
<keyword id="KW-1015">Disulfide bond</keyword>
<keyword id="KW-0297">G-protein coupled receptor</keyword>
<keyword id="KW-0325">Glycoprotein</keyword>
<keyword id="KW-0472">Membrane</keyword>
<keyword id="KW-0552">Olfaction</keyword>
<keyword id="KW-0675">Receptor</keyword>
<keyword id="KW-1185">Reference proteome</keyword>
<keyword id="KW-0716">Sensory transduction</keyword>
<keyword id="KW-0807">Transducer</keyword>
<keyword id="KW-0812">Transmembrane</keyword>
<keyword id="KW-1133">Transmembrane helix</keyword>